<name>ICP35_WSSVS</name>
<organismHost>
    <name type="scientific">Crustacea</name>
    <dbReference type="NCBI Taxonomy" id="6657"/>
</organismHost>
<accession>Q8VBE2</accession>
<dbReference type="EMBL" id="AF332093">
    <property type="protein sequence ID" value="AAL33023.1"/>
    <property type="molecule type" value="Genomic_DNA"/>
</dbReference>
<dbReference type="Proteomes" id="UP000000327">
    <property type="component" value="Segment"/>
</dbReference>
<evidence type="ECO:0000269" key="1">
    <source>
    </source>
</evidence>
<evidence type="ECO:0000303" key="2">
    <source>
    </source>
</evidence>
<evidence type="ECO:0000312" key="3">
    <source>
        <dbReference type="Proteomes" id="UP000000327"/>
    </source>
</evidence>
<reference key="1">
    <citation type="journal article" date="2001" name="J. Virol.">
        <title>Complete genome sequence of the shrimp white spot bacilliform virus.</title>
        <authorList>
            <person name="Yang F."/>
            <person name="He J."/>
            <person name="Lin X."/>
            <person name="Li Q."/>
            <person name="Pan D."/>
            <person name="Zhang X."/>
            <person name="Xu X."/>
        </authorList>
    </citation>
    <scope>NUCLEOTIDE SEQUENCE [LARGE SCALE GENOMIC DNA]</scope>
</reference>
<reference key="2">
    <citation type="journal article" date="2013" name="J. Virol.">
        <title>The DNA virus white spot syndrome virus uses an internal ribosome entry site for translation of the highly expressed nonstructural protein ICP35.</title>
        <authorList>
            <person name="Kang S.T."/>
            <person name="Wang H.C."/>
            <person name="Yang Y.T."/>
            <person name="Kou G.H."/>
            <person name="Lo C.F."/>
        </authorList>
    </citation>
    <scope>INDUCTION</scope>
</reference>
<feature type="chain" id="PRO_0000434652" description="ICP35">
    <location>
        <begin position="1"/>
        <end position="84"/>
    </location>
</feature>
<comment type="induction">
    <text evidence="1">Translated cap independently from an internal ribosome entry site (IRES). Highly expressed.</text>
</comment>
<sequence>MTPLGLVWSTTLRCAPLDACTRATAAGPKNPATTEAPTTIVTFPKLFINTVTALPSFFPNTESVAFDSSVSLISLPALSGFSVK</sequence>
<gene>
    <name evidence="2" type="primary">icp35</name>
    <name type="ordered locus">Wsv019</name>
</gene>
<protein>
    <recommendedName>
        <fullName evidence="2">ICP35</fullName>
    </recommendedName>
</protein>
<organism evidence="3">
    <name type="scientific">White spot syndrome virus (isolate Shrimp/China/Tongan/1996)</name>
    <name type="common">WSSV</name>
    <name type="synonym">White spot bacilliform virus</name>
    <dbReference type="NCBI Taxonomy" id="654913"/>
    <lineage>
        <taxon>Viruses</taxon>
        <taxon>Viruses incertae sedis</taxon>
        <taxon>Naldaviricetes</taxon>
        <taxon>Nimaviridae</taxon>
        <taxon>Whispovirus</taxon>
        <taxon>White spot syndrome virus</taxon>
    </lineage>
</organism>
<proteinExistence type="evidence at transcript level"/>
<keyword id="KW-1185">Reference proteome</keyword>